<name>LEU1_CAMJ8</name>
<protein>
    <recommendedName>
        <fullName evidence="1">2-isopropylmalate synthase</fullName>
        <ecNumber evidence="1">2.3.3.13</ecNumber>
    </recommendedName>
    <alternativeName>
        <fullName evidence="1">Alpha-IPM synthase</fullName>
    </alternativeName>
    <alternativeName>
        <fullName evidence="1">Alpha-isopropylmalate synthase</fullName>
    </alternativeName>
</protein>
<dbReference type="EC" id="2.3.3.13" evidence="1"/>
<dbReference type="EMBL" id="CP000814">
    <property type="protein sequence ID" value="ABV53222.1"/>
    <property type="molecule type" value="Genomic_DNA"/>
</dbReference>
<dbReference type="RefSeq" id="WP_002866808.1">
    <property type="nucleotide sequence ID" value="NC_009839.1"/>
</dbReference>
<dbReference type="SMR" id="A8FP35"/>
<dbReference type="KEGG" id="cju:C8J_1625"/>
<dbReference type="HOGENOM" id="CLU_022158_0_1_7"/>
<dbReference type="UniPathway" id="UPA00048">
    <property type="reaction ID" value="UER00070"/>
</dbReference>
<dbReference type="GO" id="GO:0005829">
    <property type="term" value="C:cytosol"/>
    <property type="evidence" value="ECO:0007669"/>
    <property type="project" value="TreeGrafter"/>
</dbReference>
<dbReference type="GO" id="GO:0003852">
    <property type="term" value="F:2-isopropylmalate synthase activity"/>
    <property type="evidence" value="ECO:0007669"/>
    <property type="project" value="UniProtKB-UniRule"/>
</dbReference>
<dbReference type="GO" id="GO:0003985">
    <property type="term" value="F:acetyl-CoA C-acetyltransferase activity"/>
    <property type="evidence" value="ECO:0007669"/>
    <property type="project" value="UniProtKB-UniRule"/>
</dbReference>
<dbReference type="GO" id="GO:0030145">
    <property type="term" value="F:manganese ion binding"/>
    <property type="evidence" value="ECO:0007669"/>
    <property type="project" value="UniProtKB-UniRule"/>
</dbReference>
<dbReference type="GO" id="GO:0009098">
    <property type="term" value="P:L-leucine biosynthetic process"/>
    <property type="evidence" value="ECO:0007669"/>
    <property type="project" value="UniProtKB-UniRule"/>
</dbReference>
<dbReference type="CDD" id="cd07940">
    <property type="entry name" value="DRE_TIM_IPMS"/>
    <property type="match status" value="1"/>
</dbReference>
<dbReference type="FunFam" id="1.10.238.260:FF:000001">
    <property type="entry name" value="2-isopropylmalate synthase"/>
    <property type="match status" value="1"/>
</dbReference>
<dbReference type="FunFam" id="3.20.20.70:FF:000010">
    <property type="entry name" value="2-isopropylmalate synthase"/>
    <property type="match status" value="1"/>
</dbReference>
<dbReference type="Gene3D" id="1.10.238.260">
    <property type="match status" value="1"/>
</dbReference>
<dbReference type="Gene3D" id="3.30.160.270">
    <property type="match status" value="1"/>
</dbReference>
<dbReference type="Gene3D" id="3.20.20.70">
    <property type="entry name" value="Aldolase class I"/>
    <property type="match status" value="1"/>
</dbReference>
<dbReference type="HAMAP" id="MF_01025">
    <property type="entry name" value="LeuA_type1"/>
    <property type="match status" value="1"/>
</dbReference>
<dbReference type="InterPro" id="IPR050073">
    <property type="entry name" value="2-IPM_HCS-like"/>
</dbReference>
<dbReference type="InterPro" id="IPR013709">
    <property type="entry name" value="2-isopropylmalate_synth_dimer"/>
</dbReference>
<dbReference type="InterPro" id="IPR002034">
    <property type="entry name" value="AIPM/Hcit_synth_CS"/>
</dbReference>
<dbReference type="InterPro" id="IPR013785">
    <property type="entry name" value="Aldolase_TIM"/>
</dbReference>
<dbReference type="InterPro" id="IPR054691">
    <property type="entry name" value="LeuA/HCS_post-cat"/>
</dbReference>
<dbReference type="InterPro" id="IPR036230">
    <property type="entry name" value="LeuA_allosteric_dom_sf"/>
</dbReference>
<dbReference type="InterPro" id="IPR005671">
    <property type="entry name" value="LeuA_bact_synth"/>
</dbReference>
<dbReference type="InterPro" id="IPR000891">
    <property type="entry name" value="PYR_CT"/>
</dbReference>
<dbReference type="NCBIfam" id="TIGR00973">
    <property type="entry name" value="leuA_bact"/>
    <property type="match status" value="1"/>
</dbReference>
<dbReference type="NCBIfam" id="NF002084">
    <property type="entry name" value="PRK00915.1-1"/>
    <property type="match status" value="1"/>
</dbReference>
<dbReference type="NCBIfam" id="NF002086">
    <property type="entry name" value="PRK00915.1-3"/>
    <property type="match status" value="1"/>
</dbReference>
<dbReference type="PANTHER" id="PTHR10277:SF9">
    <property type="entry name" value="2-ISOPROPYLMALATE SYNTHASE 1, CHLOROPLASTIC-RELATED"/>
    <property type="match status" value="1"/>
</dbReference>
<dbReference type="PANTHER" id="PTHR10277">
    <property type="entry name" value="HOMOCITRATE SYNTHASE-RELATED"/>
    <property type="match status" value="1"/>
</dbReference>
<dbReference type="Pfam" id="PF22617">
    <property type="entry name" value="HCS_D2"/>
    <property type="match status" value="1"/>
</dbReference>
<dbReference type="Pfam" id="PF00682">
    <property type="entry name" value="HMGL-like"/>
    <property type="match status" value="1"/>
</dbReference>
<dbReference type="Pfam" id="PF08502">
    <property type="entry name" value="LeuA_dimer"/>
    <property type="match status" value="1"/>
</dbReference>
<dbReference type="SMART" id="SM00917">
    <property type="entry name" value="LeuA_dimer"/>
    <property type="match status" value="1"/>
</dbReference>
<dbReference type="SUPFAM" id="SSF110921">
    <property type="entry name" value="2-isopropylmalate synthase LeuA, allosteric (dimerisation) domain"/>
    <property type="match status" value="1"/>
</dbReference>
<dbReference type="SUPFAM" id="SSF51569">
    <property type="entry name" value="Aldolase"/>
    <property type="match status" value="1"/>
</dbReference>
<dbReference type="PROSITE" id="PS00815">
    <property type="entry name" value="AIPM_HOMOCIT_SYNTH_1"/>
    <property type="match status" value="1"/>
</dbReference>
<dbReference type="PROSITE" id="PS00816">
    <property type="entry name" value="AIPM_HOMOCIT_SYNTH_2"/>
    <property type="match status" value="1"/>
</dbReference>
<dbReference type="PROSITE" id="PS50991">
    <property type="entry name" value="PYR_CT"/>
    <property type="match status" value="1"/>
</dbReference>
<feature type="chain" id="PRO_1000149161" description="2-isopropylmalate synthase">
    <location>
        <begin position="1"/>
        <end position="511"/>
    </location>
</feature>
<feature type="domain" description="Pyruvate carboxyltransferase" evidence="1">
    <location>
        <begin position="6"/>
        <end position="269"/>
    </location>
</feature>
<feature type="region of interest" description="Regulatory domain" evidence="1">
    <location>
        <begin position="394"/>
        <end position="511"/>
    </location>
</feature>
<feature type="binding site" evidence="1">
    <location>
        <position position="15"/>
    </location>
    <ligand>
        <name>Mn(2+)</name>
        <dbReference type="ChEBI" id="CHEBI:29035"/>
    </ligand>
</feature>
<feature type="binding site" evidence="1">
    <location>
        <position position="203"/>
    </location>
    <ligand>
        <name>Mn(2+)</name>
        <dbReference type="ChEBI" id="CHEBI:29035"/>
    </ligand>
</feature>
<feature type="binding site" evidence="1">
    <location>
        <position position="205"/>
    </location>
    <ligand>
        <name>Mn(2+)</name>
        <dbReference type="ChEBI" id="CHEBI:29035"/>
    </ligand>
</feature>
<feature type="binding site" evidence="1">
    <location>
        <position position="239"/>
    </location>
    <ligand>
        <name>Mn(2+)</name>
        <dbReference type="ChEBI" id="CHEBI:29035"/>
    </ligand>
</feature>
<organism>
    <name type="scientific">Campylobacter jejuni subsp. jejuni serotype O:6 (strain 81116 / NCTC 11828)</name>
    <dbReference type="NCBI Taxonomy" id="407148"/>
    <lineage>
        <taxon>Bacteria</taxon>
        <taxon>Pseudomonadati</taxon>
        <taxon>Campylobacterota</taxon>
        <taxon>Epsilonproteobacteria</taxon>
        <taxon>Campylobacterales</taxon>
        <taxon>Campylobacteraceae</taxon>
        <taxon>Campylobacter</taxon>
    </lineage>
</organism>
<evidence type="ECO:0000255" key="1">
    <source>
        <dbReference type="HAMAP-Rule" id="MF_01025"/>
    </source>
</evidence>
<gene>
    <name evidence="1" type="primary">leuA</name>
    <name type="ordered locus">C8J_1625</name>
</gene>
<proteinExistence type="inferred from homology"/>
<keyword id="KW-0028">Amino-acid biosynthesis</keyword>
<keyword id="KW-0100">Branched-chain amino acid biosynthesis</keyword>
<keyword id="KW-0963">Cytoplasm</keyword>
<keyword id="KW-0432">Leucine biosynthesis</keyword>
<keyword id="KW-0464">Manganese</keyword>
<keyword id="KW-0479">Metal-binding</keyword>
<keyword id="KW-0808">Transferase</keyword>
<sequence>MKDNKIIIFDTTLRDGEQALGSSLGINQKLQIALALENLGVDVIEAGFPVSSQGDFKAVQKIASKVKNSTICALSRVLDKDIDMAYEALKVAKHFRIHTFIATSTLHMQDKLKKDFDEILSMAKRAIIRARSYTDDVEFSCEDAGRTPIDNLCFMVENAIKAGAKTINIPDTVGYTLPSEFANIIKILFNKVPNIDKAIISVHCHNDLGMATGNSLSAILQGARQIECTINGLGERAGNCALEEVVMAIKTRKDYLKGFYTDIKCENIFKTSKLVSAITNESIPSHKAIVGSNAFSHSSGIHQDGVLKNRQTYEIISPSAIGIHENRMLMTARSGRAMIKTCLENLGYDENTYNLDDVYERFLRLADKKGQVYDYDLEALMFLSYENEEENKFILEKLSVISGNIPTACVCMRIKEELKTEACTGNGPVEAVFNCIARITNLKPALKAYSINAKSSGVDAQGQVDVDLEFKGRKFHGKGISTDVIEASAQAFVSAYNAIYRSLKVEERKMA</sequence>
<reference key="1">
    <citation type="journal article" date="2007" name="J. Bacteriol.">
        <title>The complete genome sequence of Campylobacter jejuni strain 81116 (NCTC11828).</title>
        <authorList>
            <person name="Pearson B.M."/>
            <person name="Gaskin D.J.H."/>
            <person name="Segers R.P.A.M."/>
            <person name="Wells J.M."/>
            <person name="Nuijten P.J.M."/>
            <person name="van Vliet A.H.M."/>
        </authorList>
    </citation>
    <scope>NUCLEOTIDE SEQUENCE [LARGE SCALE GENOMIC DNA]</scope>
    <source>
        <strain>81116 / NCTC 11828</strain>
    </source>
</reference>
<accession>A8FP35</accession>
<comment type="function">
    <text evidence="1">Catalyzes the condensation of the acetyl group of acetyl-CoA with 3-methyl-2-oxobutanoate (2-ketoisovalerate) to form 3-carboxy-3-hydroxy-4-methylpentanoate (2-isopropylmalate).</text>
</comment>
<comment type="catalytic activity">
    <reaction evidence="1">
        <text>3-methyl-2-oxobutanoate + acetyl-CoA + H2O = (2S)-2-isopropylmalate + CoA + H(+)</text>
        <dbReference type="Rhea" id="RHEA:21524"/>
        <dbReference type="ChEBI" id="CHEBI:1178"/>
        <dbReference type="ChEBI" id="CHEBI:11851"/>
        <dbReference type="ChEBI" id="CHEBI:15377"/>
        <dbReference type="ChEBI" id="CHEBI:15378"/>
        <dbReference type="ChEBI" id="CHEBI:57287"/>
        <dbReference type="ChEBI" id="CHEBI:57288"/>
        <dbReference type="EC" id="2.3.3.13"/>
    </reaction>
</comment>
<comment type="cofactor">
    <cofactor evidence="1">
        <name>Mn(2+)</name>
        <dbReference type="ChEBI" id="CHEBI:29035"/>
    </cofactor>
</comment>
<comment type="pathway">
    <text evidence="1">Amino-acid biosynthesis; L-leucine biosynthesis; L-leucine from 3-methyl-2-oxobutanoate: step 1/4.</text>
</comment>
<comment type="subunit">
    <text evidence="1">Homodimer.</text>
</comment>
<comment type="subcellular location">
    <subcellularLocation>
        <location evidence="1">Cytoplasm</location>
    </subcellularLocation>
</comment>
<comment type="similarity">
    <text evidence="1">Belongs to the alpha-IPM synthase/homocitrate synthase family. LeuA type 1 subfamily.</text>
</comment>